<proteinExistence type="evidence at protein level"/>
<evidence type="ECO:0000250" key="1"/>
<evidence type="ECO:0000250" key="2">
    <source>
        <dbReference type="UniProtKB" id="Q6EV70"/>
    </source>
</evidence>
<evidence type="ECO:0000250" key="3">
    <source>
        <dbReference type="UniProtKB" id="Q9H488"/>
    </source>
</evidence>
<evidence type="ECO:0000255" key="4"/>
<evidence type="ECO:0000269" key="5">
    <source>
    </source>
</evidence>
<evidence type="ECO:0000269" key="6">
    <source>
    </source>
</evidence>
<evidence type="ECO:0000269" key="7">
    <source>
    </source>
</evidence>
<evidence type="ECO:0000305" key="8"/>
<name>OFUT1_CRIGR</name>
<protein>
    <recommendedName>
        <fullName>GDP-fucose protein O-fucosyltransferase 1</fullName>
        <ecNumber evidence="5 6 7">2.4.1.221</ecNumber>
    </recommendedName>
    <alternativeName>
        <fullName>Peptide-O-fucosyltransferase 1</fullName>
        <shortName>O-FucT-1</shortName>
    </alternativeName>
</protein>
<keyword id="KW-0119">Carbohydrate metabolism</keyword>
<keyword id="KW-0903">Direct protein sequencing</keyword>
<keyword id="KW-1015">Disulfide bond</keyword>
<keyword id="KW-0256">Endoplasmic reticulum</keyword>
<keyword id="KW-0294">Fucose metabolism</keyword>
<keyword id="KW-0325">Glycoprotein</keyword>
<keyword id="KW-0328">Glycosyltransferase</keyword>
<keyword id="KW-0914">Notch signaling pathway</keyword>
<keyword id="KW-1185">Reference proteome</keyword>
<keyword id="KW-0808">Transferase</keyword>
<accession>P83337</accession>
<accession>G3HE95</accession>
<sequence length="392" mass="44669">MGAAAWAPPHLLLRVSLLLLLLLPLRGRLAGSWDLAGYLLYCPCMGRFGNQADHFLGSLAFAKLLNRTLAVPPWIEYQHHKPPFTNLHVSYQKYFKLEPLQAYHRVISLEEFMEKLAPIHWPPEKRVAYCFEVAAQRSPDKKTCPMKEGNPFGPFWDQFHVSFNKSELFTGISFSASYKEQWIQRFPPEEHPVLALPGAPAQFPVLEEHRALQKYMVWSDEMVKTGEAQISTHLIRPYVGIHLRIGSDWKNACAMLKDGTAGSHFMASPQCVGYSRSTATPLTMTMCLPDLNEIQRAVKLWVRALNARSIYIATDSESYVPEIQQLFKEKVKVVSLKPEVAQVDLYILGQADHFIGNCVSSFTAFVKRERDLHGRQSSFFGMDRPSQPRDEF</sequence>
<reference key="1">
    <citation type="journal article" date="2011" name="Nat. Biotechnol.">
        <title>The genomic sequence of the Chinese hamster ovary (CHO)-K1 cell line.</title>
        <authorList>
            <person name="Xu X."/>
            <person name="Nagarajan H."/>
            <person name="Lewis N.E."/>
            <person name="Pan S."/>
            <person name="Cai Z."/>
            <person name="Liu X."/>
            <person name="Chen W."/>
            <person name="Xie M."/>
            <person name="Wang W."/>
            <person name="Hammond S."/>
            <person name="Andersen M.R."/>
            <person name="Neff N."/>
            <person name="Passarelli B."/>
            <person name="Koh W."/>
            <person name="Fan H.C."/>
            <person name="Wang J."/>
            <person name="Gui Y."/>
            <person name="Lee K.H."/>
            <person name="Betenbaugh M.J."/>
            <person name="Quake S.R."/>
            <person name="Famili I."/>
            <person name="Palsson B.O."/>
            <person name="Wang J."/>
        </authorList>
    </citation>
    <scope>NUCLEOTIDE SEQUENCE [LARGE SCALE GENOMIC DNA]</scope>
</reference>
<reference evidence="8" key="2">
    <citation type="journal article" date="2001" name="J. Biol. Chem.">
        <title>Modification of epidermal growth factor-like repeats with O-fucose: molecular cloning and expression of a novel GDP-fucose protein O-fucosyltransferase.</title>
        <authorList>
            <person name="Wang Y."/>
            <person name="Shao L."/>
            <person name="Shi S."/>
            <person name="Harris R.J."/>
            <person name="Spellman M.W."/>
            <person name="Stanley P."/>
            <person name="Haltiwanger R.S."/>
        </authorList>
    </citation>
    <scope>PROTEIN SEQUENCE OF 28-88</scope>
</reference>
<reference evidence="8" key="3">
    <citation type="journal article" date="1993" name="Glycobiology">
        <title>O-linked fucose and other post-translational modifications unique to EGF modules.</title>
        <authorList>
            <person name="Harris R.J."/>
            <person name="Spellman M.W."/>
        </authorList>
    </citation>
    <scope>ACTIVITY REGULATION</scope>
    <scope>SUBSTRATE SPECIFICITY</scope>
    <scope>CATALYTIC ACTIVITY</scope>
</reference>
<reference evidence="8" key="4">
    <citation type="journal article" date="1996" name="Glycobiology">
        <title>Identification of a GDP-L-fucose:polypeptide fucosyltransferase and enzymatic addition of O-linked fucose to EGF domains.</title>
        <authorList>
            <person name="Wang Y."/>
            <person name="Lee G.F."/>
            <person name="Kelley R.F."/>
            <person name="Spellman M.W."/>
        </authorList>
    </citation>
    <scope>FUNCTION</scope>
    <scope>CATALYTIC ACTIVITY</scope>
</reference>
<reference evidence="8" key="5">
    <citation type="journal article" date="1998" name="J. Biol. Chem.">
        <title>Purification and characterization of a GDP-fucose:polypeptide fucosyltransferase from Chinese hamster ovary cells.</title>
        <authorList>
            <person name="Wang Y."/>
            <person name="Spellman M.W."/>
        </authorList>
    </citation>
    <scope>BIOPHYSICOCHEMICAL PROPERTIES</scope>
    <scope>SUBSTRATE SPECIFICITY</scope>
    <scope>GLYCOSYLATION</scope>
    <scope>STRUCTURE OF CARBOHYDRATES</scope>
</reference>
<gene>
    <name type="primary">POFUT1</name>
</gene>
<dbReference type="EC" id="2.4.1.221" evidence="5 6 7"/>
<dbReference type="EMBL" id="JH000311">
    <property type="protein sequence ID" value="EGW00282.1"/>
    <property type="molecule type" value="Genomic_DNA"/>
</dbReference>
<dbReference type="RefSeq" id="XP_003502364.1">
    <property type="nucleotide sequence ID" value="XM_003502316.2"/>
</dbReference>
<dbReference type="SMR" id="P83337"/>
<dbReference type="FunCoup" id="P83337">
    <property type="interactions" value="2172"/>
</dbReference>
<dbReference type="STRING" id="10029.P83337"/>
<dbReference type="GlyCosmos" id="P83337">
    <property type="glycosylation" value="2 sites, No reported glycans"/>
</dbReference>
<dbReference type="PaxDb" id="10029-XP_007618809.1"/>
<dbReference type="Ensembl" id="ENSCGRT00001015791.1">
    <property type="protein sequence ID" value="ENSCGRP00001011559.1"/>
    <property type="gene ID" value="ENSCGRG00001013152.1"/>
</dbReference>
<dbReference type="GeneID" id="100753417"/>
<dbReference type="CTD" id="23509"/>
<dbReference type="eggNOG" id="KOG3849">
    <property type="taxonomic scope" value="Eukaryota"/>
</dbReference>
<dbReference type="GeneTree" id="ENSGT00390000015634"/>
<dbReference type="InParanoid" id="P83337"/>
<dbReference type="OMA" id="WQNACRL"/>
<dbReference type="OrthoDB" id="10050276at2759"/>
<dbReference type="UniPathway" id="UPA00378"/>
<dbReference type="Proteomes" id="UP000001075">
    <property type="component" value="Unassembled WGS sequence"/>
</dbReference>
<dbReference type="Proteomes" id="UP000694386">
    <property type="component" value="Unplaced"/>
</dbReference>
<dbReference type="Proteomes" id="UP001108280">
    <property type="component" value="Unplaced"/>
</dbReference>
<dbReference type="GO" id="GO:0005789">
    <property type="term" value="C:endoplasmic reticulum membrane"/>
    <property type="evidence" value="ECO:0000304"/>
    <property type="project" value="Reactome"/>
</dbReference>
<dbReference type="GO" id="GO:0016757">
    <property type="term" value="F:glycosyltransferase activity"/>
    <property type="evidence" value="ECO:0000314"/>
    <property type="project" value="UniProtKB"/>
</dbReference>
<dbReference type="GO" id="GO:0046922">
    <property type="term" value="F:peptide-O-fucosyltransferase activity"/>
    <property type="evidence" value="ECO:0000314"/>
    <property type="project" value="UniProtKB"/>
</dbReference>
<dbReference type="GO" id="GO:0016740">
    <property type="term" value="F:transferase activity"/>
    <property type="evidence" value="ECO:0000314"/>
    <property type="project" value="UniProtKB"/>
</dbReference>
<dbReference type="GO" id="GO:0001525">
    <property type="term" value="P:angiogenesis"/>
    <property type="evidence" value="ECO:0007669"/>
    <property type="project" value="Ensembl"/>
</dbReference>
<dbReference type="GO" id="GO:0006004">
    <property type="term" value="P:fucose metabolic process"/>
    <property type="evidence" value="ECO:0007669"/>
    <property type="project" value="UniProtKB-KW"/>
</dbReference>
<dbReference type="GO" id="GO:0007507">
    <property type="term" value="P:heart development"/>
    <property type="evidence" value="ECO:0007669"/>
    <property type="project" value="Ensembl"/>
</dbReference>
<dbReference type="GO" id="GO:0007399">
    <property type="term" value="P:nervous system development"/>
    <property type="evidence" value="ECO:0007669"/>
    <property type="project" value="Ensembl"/>
</dbReference>
<dbReference type="GO" id="GO:0007219">
    <property type="term" value="P:Notch signaling pathway"/>
    <property type="evidence" value="ECO:0007669"/>
    <property type="project" value="UniProtKB-KW"/>
</dbReference>
<dbReference type="GO" id="GO:0006486">
    <property type="term" value="P:protein glycosylation"/>
    <property type="evidence" value="ECO:0000314"/>
    <property type="project" value="UniProtKB"/>
</dbReference>
<dbReference type="GO" id="GO:0008593">
    <property type="term" value="P:regulation of Notch signaling pathway"/>
    <property type="evidence" value="ECO:0000250"/>
    <property type="project" value="UniProtKB"/>
</dbReference>
<dbReference type="GO" id="GO:0001756">
    <property type="term" value="P:somitogenesis"/>
    <property type="evidence" value="ECO:0007669"/>
    <property type="project" value="Ensembl"/>
</dbReference>
<dbReference type="CDD" id="cd11302">
    <property type="entry name" value="O-FucT-1"/>
    <property type="match status" value="1"/>
</dbReference>
<dbReference type="FunFam" id="3.40.50.11340:FF:000001">
    <property type="entry name" value="GDP-fucose protein O-fucosyltransferase 1"/>
    <property type="match status" value="1"/>
</dbReference>
<dbReference type="FunFam" id="3.40.50.11350:FF:000004">
    <property type="entry name" value="GDP-fucose protein O-fucosyltransferase 1"/>
    <property type="match status" value="1"/>
</dbReference>
<dbReference type="Gene3D" id="3.40.50.11340">
    <property type="match status" value="1"/>
</dbReference>
<dbReference type="Gene3D" id="3.40.50.11350">
    <property type="match status" value="1"/>
</dbReference>
<dbReference type="InterPro" id="IPR019378">
    <property type="entry name" value="GDP-Fuc_O-FucTrfase"/>
</dbReference>
<dbReference type="InterPro" id="IPR039922">
    <property type="entry name" value="POFUT1"/>
</dbReference>
<dbReference type="PANTHER" id="PTHR21420">
    <property type="entry name" value="GDP-FUCOSE PROTEIN O-FUCOSYLTRANSFERASE 1"/>
    <property type="match status" value="1"/>
</dbReference>
<dbReference type="PANTHER" id="PTHR21420:SF3">
    <property type="entry name" value="GDP-FUCOSE PROTEIN O-FUCOSYLTRANSFERASE 1"/>
    <property type="match status" value="1"/>
</dbReference>
<dbReference type="Pfam" id="PF10250">
    <property type="entry name" value="O-FucT"/>
    <property type="match status" value="1"/>
</dbReference>
<feature type="chain" id="PRO_0000220935" description="GDP-fucose protein O-fucosyltransferase 1">
    <location>
        <begin position="1"/>
        <end position="392"/>
    </location>
</feature>
<feature type="short sequence motif" description="Prevents secretion from ER" evidence="4">
    <location>
        <begin position="389"/>
        <end position="392"/>
    </location>
</feature>
<feature type="binding site" evidence="3">
    <location>
        <begin position="47"/>
        <end position="50"/>
    </location>
    <ligand>
        <name>substrate</name>
    </ligand>
</feature>
<feature type="binding site" evidence="3">
    <location>
        <begin position="242"/>
        <end position="244"/>
    </location>
    <ligand>
        <name>substrate</name>
    </ligand>
</feature>
<feature type="binding site" evidence="3">
    <location>
        <position position="344"/>
    </location>
    <ligand>
        <name>substrate</name>
    </ligand>
</feature>
<feature type="binding site" evidence="3">
    <location>
        <begin position="361"/>
        <end position="362"/>
    </location>
    <ligand>
        <name>substrate</name>
    </ligand>
</feature>
<feature type="glycosylation site" description="N-linked (GlcNAc...) asparagine" evidence="4">
    <location>
        <position position="66"/>
    </location>
</feature>
<feature type="glycosylation site" description="N-linked (GlcNAc...) asparagine" evidence="4">
    <location>
        <position position="164"/>
    </location>
</feature>
<feature type="disulfide bond" evidence="3">
    <location>
        <begin position="42"/>
        <end position="44"/>
    </location>
</feature>
<feature type="disulfide bond" evidence="3">
    <location>
        <begin position="130"/>
        <end position="144"/>
    </location>
</feature>
<feature type="disulfide bond" evidence="3">
    <location>
        <begin position="253"/>
        <end position="287"/>
    </location>
</feature>
<feature type="disulfide bond" evidence="3">
    <location>
        <begin position="271"/>
        <end position="358"/>
    </location>
</feature>
<feature type="sequence conflict" description="In Ref. 2; AA sequence." evidence="8" ref="2">
    <original>N</original>
    <variation>V</variation>
    <location>
        <position position="66"/>
    </location>
</feature>
<comment type="function">
    <text evidence="1 6">Catalyzes the reaction that attaches fucose through an O-glycosidic linkage to a conserved serine or threonine residue found in the consensus sequence C2-X(4,5)-[S/T]-C3 of EGF domains, where C2 and C3 are the second and third conserved cysteines. Specifically uses GDP-fucose as donor substrate and proper disulfide pairing of the substrate EGF domains is required for fucose transfer. Plays a crucial role in NOTCH signaling. Initial fucosylation of NOTCH by POFUT1 generates a substrate for FRINGE/RFNG, an acetylglucosaminyltransferase that can then extend the fucosylation on the NOTCH EGF repeats. This extended fucosylation is required for optimal ligand binding and canonical NOTCH signaling induced by DELTA1 or JAGGED1 (By similarity). Fucosylates AGRN and determines its ability to cluster acetylcholine receptors (AChRs) (By similarity).</text>
</comment>
<comment type="catalytic activity">
    <reaction evidence="5 6 7">
        <text>L-seryl-[protein] + GDP-beta-L-fucose = 3-O-(alpha-L-fucosyl)-L-seryl-[protein] + GDP + H(+)</text>
        <dbReference type="Rhea" id="RHEA:63644"/>
        <dbReference type="Rhea" id="RHEA-COMP:9863"/>
        <dbReference type="Rhea" id="RHEA-COMP:17914"/>
        <dbReference type="ChEBI" id="CHEBI:15378"/>
        <dbReference type="ChEBI" id="CHEBI:29999"/>
        <dbReference type="ChEBI" id="CHEBI:57273"/>
        <dbReference type="ChEBI" id="CHEBI:58189"/>
        <dbReference type="ChEBI" id="CHEBI:189632"/>
        <dbReference type="EC" id="2.4.1.221"/>
    </reaction>
    <physiologicalReaction direction="left-to-right" evidence="5 6 7">
        <dbReference type="Rhea" id="RHEA:63645"/>
    </physiologicalReaction>
</comment>
<comment type="catalytic activity">
    <reaction evidence="5 6 7">
        <text>L-threonyl-[protein] + GDP-beta-L-fucose = 3-O-(alpha-L-fucosyl)-L-threonyl-[protein] + GDP + H(+)</text>
        <dbReference type="Rhea" id="RHEA:70491"/>
        <dbReference type="Rhea" id="RHEA-COMP:11060"/>
        <dbReference type="Rhea" id="RHEA-COMP:17915"/>
        <dbReference type="ChEBI" id="CHEBI:15378"/>
        <dbReference type="ChEBI" id="CHEBI:30013"/>
        <dbReference type="ChEBI" id="CHEBI:57273"/>
        <dbReference type="ChEBI" id="CHEBI:58189"/>
        <dbReference type="ChEBI" id="CHEBI:189631"/>
        <dbReference type="EC" id="2.4.1.221"/>
    </reaction>
    <physiologicalReaction direction="left-to-right" evidence="5 6 7">
        <dbReference type="Rhea" id="RHEA:70492"/>
    </physiologicalReaction>
</comment>
<comment type="activity regulation">
    <text evidence="5">Activated by manganese and, to a lesser extent, by other divalent metals such as cobalt and calcium. Inhibited by copper, ferric and zinc ions.</text>
</comment>
<comment type="biophysicochemical properties">
    <kinetics>
        <KM evidence="7">11 uM for His(6)-F7-EGF-1</KM>
        <KM evidence="7">15 uM for F7-EGF-1</KM>
        <Vmax evidence="7">2.5 umol/min/mg enzyme</Vmax>
        <Vmax evidence="7">2.4 umol/min/mg enzyme</Vmax>
    </kinetics>
    <phDependence>
        <text evidence="7">Optimum pH is 5.5-8.0.</text>
    </phDependence>
</comment>
<comment type="pathway">
    <text>Protein modification; protein glycosylation.</text>
</comment>
<comment type="subcellular location">
    <subcellularLocation>
        <location evidence="2">Endoplasmic reticulum</location>
    </subcellularLocation>
</comment>
<comment type="PTM">
    <text evidence="7">N-glycosylated. Contains high mannose-type carbohydrates.</text>
</comment>
<comment type="similarity">
    <text evidence="8">Belongs to the glycosyltransferase 65 family.</text>
</comment>
<organism>
    <name type="scientific">Cricetulus griseus</name>
    <name type="common">Chinese hamster</name>
    <name type="synonym">Cricetulus barabensis griseus</name>
    <dbReference type="NCBI Taxonomy" id="10029"/>
    <lineage>
        <taxon>Eukaryota</taxon>
        <taxon>Metazoa</taxon>
        <taxon>Chordata</taxon>
        <taxon>Craniata</taxon>
        <taxon>Vertebrata</taxon>
        <taxon>Euteleostomi</taxon>
        <taxon>Mammalia</taxon>
        <taxon>Eutheria</taxon>
        <taxon>Euarchontoglires</taxon>
        <taxon>Glires</taxon>
        <taxon>Rodentia</taxon>
        <taxon>Myomorpha</taxon>
        <taxon>Muroidea</taxon>
        <taxon>Cricetidae</taxon>
        <taxon>Cricetinae</taxon>
        <taxon>Cricetulus</taxon>
    </lineage>
</organism>